<feature type="chain" id="PRO_1000188904" description="Urease subunit beta">
    <location>
        <begin position="1"/>
        <end position="106"/>
    </location>
</feature>
<name>URE2_ACIBS</name>
<evidence type="ECO:0000255" key="1">
    <source>
        <dbReference type="HAMAP-Rule" id="MF_01954"/>
    </source>
</evidence>
<dbReference type="EC" id="3.5.1.5" evidence="1"/>
<dbReference type="EMBL" id="CU468230">
    <property type="protein sequence ID" value="CAP01689.1"/>
    <property type="molecule type" value="Genomic_DNA"/>
</dbReference>
<dbReference type="SMR" id="B0VSC1"/>
<dbReference type="KEGG" id="abm:ABSDF2376"/>
<dbReference type="HOGENOM" id="CLU_129707_1_1_6"/>
<dbReference type="UniPathway" id="UPA00258">
    <property type="reaction ID" value="UER00370"/>
</dbReference>
<dbReference type="Proteomes" id="UP000001741">
    <property type="component" value="Chromosome"/>
</dbReference>
<dbReference type="GO" id="GO:0035550">
    <property type="term" value="C:urease complex"/>
    <property type="evidence" value="ECO:0007669"/>
    <property type="project" value="InterPro"/>
</dbReference>
<dbReference type="GO" id="GO:0009039">
    <property type="term" value="F:urease activity"/>
    <property type="evidence" value="ECO:0007669"/>
    <property type="project" value="UniProtKB-UniRule"/>
</dbReference>
<dbReference type="GO" id="GO:0043419">
    <property type="term" value="P:urea catabolic process"/>
    <property type="evidence" value="ECO:0007669"/>
    <property type="project" value="UniProtKB-UniRule"/>
</dbReference>
<dbReference type="CDD" id="cd00407">
    <property type="entry name" value="Urease_beta"/>
    <property type="match status" value="1"/>
</dbReference>
<dbReference type="FunFam" id="2.10.150.10:FF:000001">
    <property type="entry name" value="Urease subunit beta"/>
    <property type="match status" value="1"/>
</dbReference>
<dbReference type="Gene3D" id="2.10.150.10">
    <property type="entry name" value="Urease, beta subunit"/>
    <property type="match status" value="1"/>
</dbReference>
<dbReference type="HAMAP" id="MF_01954">
    <property type="entry name" value="Urease_beta"/>
    <property type="match status" value="1"/>
</dbReference>
<dbReference type="InterPro" id="IPR002019">
    <property type="entry name" value="Urease_beta-like"/>
</dbReference>
<dbReference type="InterPro" id="IPR036461">
    <property type="entry name" value="Urease_betasu_sf"/>
</dbReference>
<dbReference type="InterPro" id="IPR050069">
    <property type="entry name" value="Urease_subunit"/>
</dbReference>
<dbReference type="NCBIfam" id="NF009682">
    <property type="entry name" value="PRK13203.1"/>
    <property type="match status" value="1"/>
</dbReference>
<dbReference type="NCBIfam" id="TIGR00192">
    <property type="entry name" value="urease_beta"/>
    <property type="match status" value="1"/>
</dbReference>
<dbReference type="PANTHER" id="PTHR33569">
    <property type="entry name" value="UREASE"/>
    <property type="match status" value="1"/>
</dbReference>
<dbReference type="PANTHER" id="PTHR33569:SF1">
    <property type="entry name" value="UREASE"/>
    <property type="match status" value="1"/>
</dbReference>
<dbReference type="Pfam" id="PF00699">
    <property type="entry name" value="Urease_beta"/>
    <property type="match status" value="1"/>
</dbReference>
<dbReference type="SUPFAM" id="SSF51278">
    <property type="entry name" value="Urease, beta-subunit"/>
    <property type="match status" value="1"/>
</dbReference>
<proteinExistence type="inferred from homology"/>
<sequence length="106" mass="11747">MIPGEVITPETDIELNVGRETLKVVVANLGDRPIQVGSHFHFYEANDALQFDREVAKGFRLNIAAGTAIRFEPGQSREVELVALAGKREVYGFAGRVMGRLYENVD</sequence>
<comment type="catalytic activity">
    <reaction evidence="1">
        <text>urea + 2 H2O + H(+) = hydrogencarbonate + 2 NH4(+)</text>
        <dbReference type="Rhea" id="RHEA:20557"/>
        <dbReference type="ChEBI" id="CHEBI:15377"/>
        <dbReference type="ChEBI" id="CHEBI:15378"/>
        <dbReference type="ChEBI" id="CHEBI:16199"/>
        <dbReference type="ChEBI" id="CHEBI:17544"/>
        <dbReference type="ChEBI" id="CHEBI:28938"/>
        <dbReference type="EC" id="3.5.1.5"/>
    </reaction>
</comment>
<comment type="pathway">
    <text evidence="1">Nitrogen metabolism; urea degradation; CO(2) and NH(3) from urea (urease route): step 1/1.</text>
</comment>
<comment type="subunit">
    <text evidence="1">Heterotrimer of UreA (gamma), UreB (beta) and UreC (alpha) subunits. Three heterotrimers associate to form the active enzyme.</text>
</comment>
<comment type="subcellular location">
    <subcellularLocation>
        <location evidence="1">Cytoplasm</location>
    </subcellularLocation>
</comment>
<comment type="similarity">
    <text evidence="1">Belongs to the urease beta subunit family.</text>
</comment>
<keyword id="KW-0963">Cytoplasm</keyword>
<keyword id="KW-0378">Hydrolase</keyword>
<organism>
    <name type="scientific">Acinetobacter baumannii (strain SDF)</name>
    <dbReference type="NCBI Taxonomy" id="509170"/>
    <lineage>
        <taxon>Bacteria</taxon>
        <taxon>Pseudomonadati</taxon>
        <taxon>Pseudomonadota</taxon>
        <taxon>Gammaproteobacteria</taxon>
        <taxon>Moraxellales</taxon>
        <taxon>Moraxellaceae</taxon>
        <taxon>Acinetobacter</taxon>
        <taxon>Acinetobacter calcoaceticus/baumannii complex</taxon>
    </lineage>
</organism>
<gene>
    <name evidence="1" type="primary">ureB</name>
    <name type="ordered locus">ABSDF2376</name>
</gene>
<protein>
    <recommendedName>
        <fullName evidence="1">Urease subunit beta</fullName>
        <ecNumber evidence="1">3.5.1.5</ecNumber>
    </recommendedName>
    <alternativeName>
        <fullName evidence="1">Urea amidohydrolase subunit beta</fullName>
    </alternativeName>
</protein>
<reference key="1">
    <citation type="journal article" date="2008" name="PLoS ONE">
        <title>Comparative analysis of Acinetobacters: three genomes for three lifestyles.</title>
        <authorList>
            <person name="Vallenet D."/>
            <person name="Nordmann P."/>
            <person name="Barbe V."/>
            <person name="Poirel L."/>
            <person name="Mangenot S."/>
            <person name="Bataille E."/>
            <person name="Dossat C."/>
            <person name="Gas S."/>
            <person name="Kreimeyer A."/>
            <person name="Lenoble P."/>
            <person name="Oztas S."/>
            <person name="Poulain J."/>
            <person name="Segurens B."/>
            <person name="Robert C."/>
            <person name="Abergel C."/>
            <person name="Claverie J.-M."/>
            <person name="Raoult D."/>
            <person name="Medigue C."/>
            <person name="Weissenbach J."/>
            <person name="Cruveiller S."/>
        </authorList>
    </citation>
    <scope>NUCLEOTIDE SEQUENCE [LARGE SCALE GENOMIC DNA]</scope>
    <source>
        <strain>SDF</strain>
    </source>
</reference>
<accession>B0VSC1</accession>